<comment type="function">
    <text evidence="1">mRNA-binding protein which stimulates mRNA decapping.</text>
</comment>
<comment type="subcellular location">
    <subcellularLocation>
        <location evidence="1">Cytoplasm</location>
    </subcellularLocation>
</comment>
<comment type="similarity">
    <text evidence="3">Belongs to the EDC family.</text>
</comment>
<dbReference type="EMBL" id="CR382139">
    <property type="protein sequence ID" value="CAG90135.2"/>
    <property type="molecule type" value="Genomic_DNA"/>
</dbReference>
<dbReference type="RefSeq" id="XP_461687.2">
    <property type="nucleotide sequence ID" value="XM_461687.2"/>
</dbReference>
<dbReference type="GeneID" id="2904555"/>
<dbReference type="KEGG" id="dha:DEHA2G03256g"/>
<dbReference type="VEuPathDB" id="FungiDB:DEHA2G03256g"/>
<dbReference type="eggNOG" id="ENOG502RIVV">
    <property type="taxonomic scope" value="Eukaryota"/>
</dbReference>
<dbReference type="HOGENOM" id="CLU_860511_0_0_1"/>
<dbReference type="InParanoid" id="Q6BJD4"/>
<dbReference type="OMA" id="GYINYQY"/>
<dbReference type="OrthoDB" id="4026794at2759"/>
<dbReference type="Proteomes" id="UP000000599">
    <property type="component" value="Chromosome G"/>
</dbReference>
<dbReference type="GO" id="GO:0005737">
    <property type="term" value="C:cytoplasm"/>
    <property type="evidence" value="ECO:0007669"/>
    <property type="project" value="UniProtKB-SubCell"/>
</dbReference>
<dbReference type="GO" id="GO:0003723">
    <property type="term" value="F:RNA binding"/>
    <property type="evidence" value="ECO:0007669"/>
    <property type="project" value="UniProtKB-KW"/>
</dbReference>
<dbReference type="GO" id="GO:0006397">
    <property type="term" value="P:mRNA processing"/>
    <property type="evidence" value="ECO:0007669"/>
    <property type="project" value="UniProtKB-KW"/>
</dbReference>
<dbReference type="GO" id="GO:0000184">
    <property type="term" value="P:nuclear-transcribed mRNA catabolic process, nonsense-mediated decay"/>
    <property type="evidence" value="ECO:0007669"/>
    <property type="project" value="UniProtKB-KW"/>
</dbReference>
<dbReference type="InterPro" id="IPR028322">
    <property type="entry name" value="PNRC-like_rgn"/>
</dbReference>
<dbReference type="Pfam" id="PF15365">
    <property type="entry name" value="PNRC"/>
    <property type="match status" value="1"/>
</dbReference>
<feature type="chain" id="PRO_0000285359" description="Enhancer of mRNA-decapping protein 1">
    <location>
        <begin position="1"/>
        <end position="352"/>
    </location>
</feature>
<feature type="region of interest" description="Disordered" evidence="2">
    <location>
        <begin position="1"/>
        <end position="258"/>
    </location>
</feature>
<feature type="region of interest" description="Disordered" evidence="2">
    <location>
        <begin position="277"/>
        <end position="352"/>
    </location>
</feature>
<feature type="compositionally biased region" description="Low complexity" evidence="2">
    <location>
        <begin position="71"/>
        <end position="80"/>
    </location>
</feature>
<feature type="compositionally biased region" description="Polar residues" evidence="2">
    <location>
        <begin position="93"/>
        <end position="104"/>
    </location>
</feature>
<feature type="compositionally biased region" description="Polar residues" evidence="2">
    <location>
        <begin position="205"/>
        <end position="225"/>
    </location>
</feature>
<feature type="compositionally biased region" description="Low complexity" evidence="2">
    <location>
        <begin position="289"/>
        <end position="309"/>
    </location>
</feature>
<keyword id="KW-0963">Cytoplasm</keyword>
<keyword id="KW-0507">mRNA processing</keyword>
<keyword id="KW-0866">Nonsense-mediated mRNA decay</keyword>
<keyword id="KW-1185">Reference proteome</keyword>
<keyword id="KW-0694">RNA-binding</keyword>
<gene>
    <name type="primary">EDC1</name>
    <name type="ordered locus">DEHA2G03256g</name>
</gene>
<evidence type="ECO:0000250" key="1"/>
<evidence type="ECO:0000256" key="2">
    <source>
        <dbReference type="SAM" id="MobiDB-lite"/>
    </source>
</evidence>
<evidence type="ECO:0000305" key="3"/>
<name>EDC1_DEBHA</name>
<sequence length="352" mass="38450">MMAHELPLSIHTKKSNHNVPPSKAPSAKTNKHKPSKSGSDDRGLPNGGKVDFGNKSGSQTNKKSNKKTSKHTSSNTSNNKGVTRVLPDGSKPNFGNESSHQNGGNHKKQNNEPCLPNGEKPNFGEGSKSHSKKKNNDHVLPNGEKPNFFNEKSSKKATKPKEKKPLITEDTYAGSSFHSSPAALNLPKPSFKTSPKTNDAKQHTTEPNYHVNPQVNTPPQHSVNVPPQHPVTTYPAGNGVPNIPTVPSNPTAFPPRNHYAQPGFSYYATPQGYINYQYPQVPPPPPPQGGVYPMVAPQYQQQPQQHPQQHPQPQPQPQQLPQQHRPHHLPAIAAPQQGHRISFNELLGSSKS</sequence>
<protein>
    <recommendedName>
        <fullName>Enhancer of mRNA-decapping protein 1</fullName>
    </recommendedName>
</protein>
<reference key="1">
    <citation type="journal article" date="2004" name="Nature">
        <title>Genome evolution in yeasts.</title>
        <authorList>
            <person name="Dujon B."/>
            <person name="Sherman D."/>
            <person name="Fischer G."/>
            <person name="Durrens P."/>
            <person name="Casaregola S."/>
            <person name="Lafontaine I."/>
            <person name="de Montigny J."/>
            <person name="Marck C."/>
            <person name="Neuveglise C."/>
            <person name="Talla E."/>
            <person name="Goffard N."/>
            <person name="Frangeul L."/>
            <person name="Aigle M."/>
            <person name="Anthouard V."/>
            <person name="Babour A."/>
            <person name="Barbe V."/>
            <person name="Barnay S."/>
            <person name="Blanchin S."/>
            <person name="Beckerich J.-M."/>
            <person name="Beyne E."/>
            <person name="Bleykasten C."/>
            <person name="Boisrame A."/>
            <person name="Boyer J."/>
            <person name="Cattolico L."/>
            <person name="Confanioleri F."/>
            <person name="de Daruvar A."/>
            <person name="Despons L."/>
            <person name="Fabre E."/>
            <person name="Fairhead C."/>
            <person name="Ferry-Dumazet H."/>
            <person name="Groppi A."/>
            <person name="Hantraye F."/>
            <person name="Hennequin C."/>
            <person name="Jauniaux N."/>
            <person name="Joyet P."/>
            <person name="Kachouri R."/>
            <person name="Kerrest A."/>
            <person name="Koszul R."/>
            <person name="Lemaire M."/>
            <person name="Lesur I."/>
            <person name="Ma L."/>
            <person name="Muller H."/>
            <person name="Nicaud J.-M."/>
            <person name="Nikolski M."/>
            <person name="Oztas S."/>
            <person name="Ozier-Kalogeropoulos O."/>
            <person name="Pellenz S."/>
            <person name="Potier S."/>
            <person name="Richard G.-F."/>
            <person name="Straub M.-L."/>
            <person name="Suleau A."/>
            <person name="Swennen D."/>
            <person name="Tekaia F."/>
            <person name="Wesolowski-Louvel M."/>
            <person name="Westhof E."/>
            <person name="Wirth B."/>
            <person name="Zeniou-Meyer M."/>
            <person name="Zivanovic Y."/>
            <person name="Bolotin-Fukuhara M."/>
            <person name="Thierry A."/>
            <person name="Bouchier C."/>
            <person name="Caudron B."/>
            <person name="Scarpelli C."/>
            <person name="Gaillardin C."/>
            <person name="Weissenbach J."/>
            <person name="Wincker P."/>
            <person name="Souciet J.-L."/>
        </authorList>
    </citation>
    <scope>NUCLEOTIDE SEQUENCE [LARGE SCALE GENOMIC DNA]</scope>
    <source>
        <strain>ATCC 36239 / CBS 767 / BCRC 21394 / JCM 1990 / NBRC 0083 / IGC 2968</strain>
    </source>
</reference>
<accession>Q6BJD4</accession>
<proteinExistence type="inferred from homology"/>
<organism>
    <name type="scientific">Debaryomyces hansenii (strain ATCC 36239 / CBS 767 / BCRC 21394 / JCM 1990 / NBRC 0083 / IGC 2968)</name>
    <name type="common">Yeast</name>
    <name type="synonym">Torulaspora hansenii</name>
    <dbReference type="NCBI Taxonomy" id="284592"/>
    <lineage>
        <taxon>Eukaryota</taxon>
        <taxon>Fungi</taxon>
        <taxon>Dikarya</taxon>
        <taxon>Ascomycota</taxon>
        <taxon>Saccharomycotina</taxon>
        <taxon>Pichiomycetes</taxon>
        <taxon>Debaryomycetaceae</taxon>
        <taxon>Debaryomyces</taxon>
    </lineage>
</organism>